<protein>
    <recommendedName>
        <fullName evidence="4">eIF-2-alpha kinase GCN2</fullName>
        <ecNumber evidence="4">2.7.11.1</ecNumber>
    </recommendedName>
    <alternativeName>
        <fullName evidence="11">Eukaryotic translation initiation factor 2-alpha kinase 4</fullName>
    </alternativeName>
    <alternativeName>
        <fullName>GCN2-like protein</fullName>
    </alternativeName>
</protein>
<keyword id="KW-0007">Acetylation</keyword>
<keyword id="KW-0010">Activator</keyword>
<keyword id="KW-0067">ATP-binding</keyword>
<keyword id="KW-0131">Cell cycle</keyword>
<keyword id="KW-0175">Coiled coil</keyword>
<keyword id="KW-0963">Cytoplasm</keyword>
<keyword id="KW-0221">Differentiation</keyword>
<keyword id="KW-0338">Growth arrest</keyword>
<keyword id="KW-0418">Kinase</keyword>
<keyword id="KW-0524">Neurogenesis</keyword>
<keyword id="KW-0547">Nucleotide-binding</keyword>
<keyword id="KW-0597">Phosphoprotein</keyword>
<keyword id="KW-1185">Reference proteome</keyword>
<keyword id="KW-0694">RNA-binding</keyword>
<keyword id="KW-0723">Serine/threonine-protein kinase</keyword>
<keyword id="KW-0346">Stress response</keyword>
<keyword id="KW-0808">Transferase</keyword>
<keyword id="KW-0810">Translation regulation</keyword>
<keyword id="KW-0820">tRNA-binding</keyword>
<feature type="chain" id="PRO_0000435425" description="eIF-2-alpha kinase GCN2">
    <location>
        <begin position="1"/>
        <end position="1649"/>
    </location>
</feature>
<feature type="domain" description="RWD" evidence="7">
    <location>
        <begin position="25"/>
        <end position="137"/>
    </location>
</feature>
<feature type="domain" description="Protein kinase 1" evidence="6">
    <location>
        <begin position="296"/>
        <end position="539"/>
    </location>
</feature>
<feature type="domain" description="Protein kinase 2" evidence="6">
    <location>
        <begin position="590"/>
        <end position="1001"/>
    </location>
</feature>
<feature type="region of interest" description="Disordered" evidence="8">
    <location>
        <begin position="1"/>
        <end position="26"/>
    </location>
</feature>
<feature type="region of interest" description="Disordered" evidence="8">
    <location>
        <begin position="227"/>
        <end position="260"/>
    </location>
</feature>
<feature type="region of interest" description="Disordered" evidence="8">
    <location>
        <begin position="662"/>
        <end position="785"/>
    </location>
</feature>
<feature type="region of interest" description="Histidyl-tRNA synthetase-like" evidence="4">
    <location>
        <begin position="1022"/>
        <end position="1493"/>
    </location>
</feature>
<feature type="coiled-coil region" evidence="5">
    <location>
        <begin position="146"/>
        <end position="205"/>
    </location>
</feature>
<feature type="compositionally biased region" description="Basic residues" evidence="8">
    <location>
        <begin position="239"/>
        <end position="249"/>
    </location>
</feature>
<feature type="compositionally biased region" description="Polar residues" evidence="8">
    <location>
        <begin position="705"/>
        <end position="721"/>
    </location>
</feature>
<feature type="compositionally biased region" description="Acidic residues" evidence="8">
    <location>
        <begin position="731"/>
        <end position="740"/>
    </location>
</feature>
<feature type="compositionally biased region" description="Acidic residues" evidence="8">
    <location>
        <begin position="754"/>
        <end position="764"/>
    </location>
</feature>
<feature type="active site" description="Proton acceptor" evidence="6">
    <location>
        <position position="847"/>
    </location>
</feature>
<feature type="binding site" evidence="6">
    <location>
        <begin position="596"/>
        <end position="604"/>
    </location>
    <ligand>
        <name>ATP</name>
        <dbReference type="ChEBI" id="CHEBI:30616"/>
    </ligand>
</feature>
<feature type="binding site" evidence="6">
    <location>
        <position position="619"/>
    </location>
    <ligand>
        <name>ATP</name>
        <dbReference type="ChEBI" id="CHEBI:30616"/>
    </ligand>
</feature>
<feature type="modified residue" description="Phosphoserine" evidence="3">
    <location>
        <position position="230"/>
    </location>
</feature>
<feature type="modified residue" description="Phosphothreonine" evidence="3">
    <location>
        <position position="667"/>
    </location>
</feature>
<feature type="modified residue" description="Phosphothreonine" evidence="3">
    <location>
        <position position="870"/>
    </location>
</feature>
<feature type="modified residue" description="Phosphothreonine; by autocatalysis" evidence="4">
    <location>
        <position position="899"/>
    </location>
</feature>
<feature type="modified residue" description="Phosphothreonine; by autocatalysis" evidence="1">
    <location>
        <position position="904"/>
    </location>
</feature>
<feature type="modified residue" description="N6-acetyllysine" evidence="3">
    <location>
        <position position="1259"/>
    </location>
</feature>
<sequence>MAGGRGAAGRGPAEPQESYSQRQDHELQALEAIYGSDFQDLRPDARGRVREPPEINLVLYPQGLAGEEVYVQVELRVKCPPTYPDVVPEIELKNTKGLSNESVNLLKSHLEELAKKQCGEVMIFELAHHVQSFLSEHNKPPPKSFHEEMLERQAQEKQQRLLEARQKEEQEQREILHEIQKRKEEIKEEKKRKEMAKQERLEITSLTNQDHASKRDPAGHRAAAFLHGGSPDFVGNGKARAHSSGRSRRERQYSVCSGEASPGSCDILYFCVGSADQLMVHKGKCVGSDEQLGKVVYNALETATGSFVLLYEWVLQWQKKMGPCLTSQEKEKIDKCKKQIQGAETEFSSLVKLSHPNIVRYFAMNSREEKDSIVVDILAEHISGISLAAHLSHSGPVPMHQLRKYTAQLLAGLDYLHRNSVVHKVLSTASVLVDAEGTVKITDYSISKRLADICKEDVFEQTRVRFSDSALPYKTGKKGDVWRLGLLLLSLSQGQECEEYPVTIPSDLPADFQDFLKKCVCLDDKERWSPQQLLKHSFINPQPKMPLVEQSPEDSGGQDYIETIIPSNQLPSAAFFTETQRQFSRYFIEFEELQLLGKGAFGAVIKVQNKLDGCCYAVKRIPINPASRQFRRIKGEVTLLSRLHHENIVRYYNAWIERHERPAVPGTPPPDYIPQAQNSSATGGKASGDTEELGSVEAAAPPPILSSSVEWSTSAERSNSARFPVTGQDSSSDEEDEDERDGVFSQSFLPASDSDSDIIFDNEDENSKSQNQDEDCNEKDSRHEIEPSVTTEAVHYLYIQMEYCEKSTLRDTIDQGLFRDTSRLWRLFREILDGLAYIHEKGMIHRDLKPVNIFLDSDDHVKIGDFGLATDHLAFNAEGKQDDQAGDHVIKSDPSGHLTGMVGTALYVSPEVQGSTKSAYNQKVDLFSLGIILFEMSYHPMVTASERIFVLNQLRDPTSPKFPDDFEDGEHTKQKSVISWLLNHDPAKRPTAMELLKSELLPPPQMEESELHEVLHHTLANTDGKAYRTMMSQLFCQHSSPAIDYTYDSDILKGNFLIRTAKIQQLVCETIVRVFKRHGAVQLCTPLLLPRNRQIYEHNEAALFMDHSGMLVMLPFDLRVPFARYVARNNILNLKRYCIERVFRPRKLDRFHPKELLECAFDIVTSTANSSLPTAETIYTIYEVIQEFPALQERNYSIYLNHTMLLKAILLHCGIPEDKLSQVYVILYDAVTEKLTRREVEAKFCNLSLSSNSLCRLYKFIEQKGDLQDLTPTINSLIKQKTGIAQLVKYSLKDLEEVVGLLKKLGVKLQVSINLGLVYKVQQHNGIIFQFLAFSKRRQRVVPEILAAGGRYDLLIPKFRGPQALGPVPTAVGVSIAIDKIFAAVLNMGEPVTVSSCDLLVVSAGQMSMSRAINLTQKLWTAGITAEIMYDWSQSQEELQEYCRHHEITYVALVSDKEGSHVKVKSFEKERQTEKRVLESDLVDHVMQKLRTKVGDERNFRDASDNLAVQTLKGSFSNASGLFEIHGTTVVPTVSVISPEKLSASTRRRHEIQVQTRLQTTLANLHQKSSEIEILAVDLPKETILQFLSLEWDADEQAFNTTVKQLLSRLPKQRYLKLVCDEIYNIKVEKKVSVLFLYSYRDDYYRILF</sequence>
<proteinExistence type="inferred from homology"/>
<evidence type="ECO:0000250" key="1"/>
<evidence type="ECO:0000250" key="2">
    <source>
        <dbReference type="UniProtKB" id="P15442"/>
    </source>
</evidence>
<evidence type="ECO:0000250" key="3">
    <source>
        <dbReference type="UniProtKB" id="Q9P2K8"/>
    </source>
</evidence>
<evidence type="ECO:0000250" key="4">
    <source>
        <dbReference type="UniProtKB" id="Q9QZ05"/>
    </source>
</evidence>
<evidence type="ECO:0000255" key="5"/>
<evidence type="ECO:0000255" key="6">
    <source>
        <dbReference type="PROSITE-ProRule" id="PRU00159"/>
    </source>
</evidence>
<evidence type="ECO:0000255" key="7">
    <source>
        <dbReference type="PROSITE-ProRule" id="PRU00179"/>
    </source>
</evidence>
<evidence type="ECO:0000256" key="8">
    <source>
        <dbReference type="SAM" id="MobiDB-lite"/>
    </source>
</evidence>
<evidence type="ECO:0000269" key="9">
    <source>
    </source>
</evidence>
<evidence type="ECO:0000269" key="10">
    <source>
    </source>
</evidence>
<evidence type="ECO:0000312" key="11">
    <source>
        <dbReference type="RGD" id="1311439"/>
    </source>
</evidence>
<accession>D4A7V9</accession>
<comment type="function">
    <text evidence="2 3 4 9 10">Metabolic-stress sensing protein kinase that phosphorylates the alpha subunit of eukaryotic translation initiation factor 2 (EIF2S1/eIF-2-alpha) in response to low amino acid availability (By similarity). Plays a role as an activator of the integrated stress response (ISR) required for adaptation to amino acid starvation (By similarity). EIF2S1/eIF-2-alpha phosphorylation in response to stress converts EIF2S1/eIF-2-alpha into a global protein synthesis inhibitor, leading to a global attenuation of cap-dependent translation, and thus to a reduced overall utilization of amino acids, while concomitantly initiating the preferential translation of ISR-specific mRNAs, such as the transcriptional activator ATF4, and hence allowing ATF4-mediated reprogramming of amino acid biosynthetic gene expression to alleviate nutrient depletion (By similarity). Required for the translational induction of protein kinase PRKCH following amino acid starvation (By similarity). Binds uncharged tRNAs (By similarity). Involved in cell cycle arrest by promoting cyclin D1 mRNA translation repression after the unfolded protein response pathway (UPR) activation or cell cycle inhibitor CDKN1A/p21 mRNA translation activation in response to amino acid deprivation (By similarity). Plays a role in the consolidation of synaptic plasticity, learning as well as formation of long-term memory (By similarity). Plays a role in neurite outgrowth inhibition (By similarity). Plays a role in feeding behavior to maintain amino acid homeostasis; contributes to the innate aversion toward diets of imbalanced amino acid composition (PubMed:15051816, PubMed:15774759). Plays a proapoptotic role in response to glucose deprivation (By similarity). Promotes global cellular protein synthesis repression in response to UV irradiation independently of the stress-activated protein kinase/c-Jun N-terminal kinase (SAPK/JNK) and p38 MAPK signaling pathways (By similarity). Plays a role in the antiviral response against alphavirus infection; impairs early viral mRNA translation of the incoming genomic virus RNA, thus preventing alphavirus replication (By similarity).</text>
</comment>
<comment type="catalytic activity">
    <reaction evidence="4">
        <text>L-seryl-[protein] + ATP = O-phospho-L-seryl-[protein] + ADP + H(+)</text>
        <dbReference type="Rhea" id="RHEA:17989"/>
        <dbReference type="Rhea" id="RHEA-COMP:9863"/>
        <dbReference type="Rhea" id="RHEA-COMP:11604"/>
        <dbReference type="ChEBI" id="CHEBI:15378"/>
        <dbReference type="ChEBI" id="CHEBI:29999"/>
        <dbReference type="ChEBI" id="CHEBI:30616"/>
        <dbReference type="ChEBI" id="CHEBI:83421"/>
        <dbReference type="ChEBI" id="CHEBI:456216"/>
        <dbReference type="EC" id="2.7.11.1"/>
    </reaction>
</comment>
<comment type="catalytic activity">
    <reaction evidence="4">
        <text>L-threonyl-[protein] + ATP = O-phospho-L-threonyl-[protein] + ADP + H(+)</text>
        <dbReference type="Rhea" id="RHEA:46608"/>
        <dbReference type="Rhea" id="RHEA-COMP:11060"/>
        <dbReference type="Rhea" id="RHEA-COMP:11605"/>
        <dbReference type="ChEBI" id="CHEBI:15378"/>
        <dbReference type="ChEBI" id="CHEBI:30013"/>
        <dbReference type="ChEBI" id="CHEBI:30616"/>
        <dbReference type="ChEBI" id="CHEBI:61977"/>
        <dbReference type="ChEBI" id="CHEBI:456216"/>
        <dbReference type="EC" id="2.7.11.1"/>
    </reaction>
</comment>
<comment type="subunit">
    <text evidence="2 3 4">Homodimer; homodimerization is important for kinase activation by uncharged tRNAs. Interacts with GCN1; this interaction stimulates EIF2AK4/GCN2 kinase activity and is impaired by IMPACT upon a variety of stress conditions, such as amino acid depletion, UV-C irradiation, proteasome inhibitor treatment and glucose deprivation. Interacts with DNAJC3; this interaction inhibits EIF2AK4/GCN2 kinase activity during endoplasmic reticulum (ER), hypothermic and amino acid-starving stress conditions. Interacts with MAP3K20; activates EIF2AK4/GCN2 kinase activity in response to moderate ribotoxic stress (By similarity).</text>
</comment>
<comment type="subcellular location">
    <subcellularLocation>
        <location evidence="4">Cytoplasm</location>
    </subcellularLocation>
</comment>
<comment type="domain">
    <text evidence="4">The histidyl-tRNA synthetase-like region and protein kinase domains are necessary for eIF-2-alpha kinase activity and eIF-2-alpha-mediated translational control. The histidyl-tRNA synthetase-like domain is necessary for binding to uncharged tRNAs. Kinase domain 1 is a degenerate kinase domain.</text>
</comment>
<comment type="PTM">
    <text evidence="4">Autophosphorylated; autophosphorylation on Thr-899 is increased upon amino acid starvation and in UV irradiation cells and inhibited in presence of IMPACT.</text>
</comment>
<comment type="similarity">
    <text evidence="6">Belongs to the protein kinase superfamily. Ser/Thr protein kinase family. GCN2 subfamily.</text>
</comment>
<gene>
    <name evidence="11" type="primary">Eif2ak4</name>
    <name type="synonym">Gcn2</name>
</gene>
<reference key="1">
    <citation type="journal article" date="2004" name="Nature">
        <title>Genome sequence of the Brown Norway rat yields insights into mammalian evolution.</title>
        <authorList>
            <person name="Gibbs R.A."/>
            <person name="Weinstock G.M."/>
            <person name="Metzker M.L."/>
            <person name="Muzny D.M."/>
            <person name="Sodergren E.J."/>
            <person name="Scherer S."/>
            <person name="Scott G."/>
            <person name="Steffen D."/>
            <person name="Worley K.C."/>
            <person name="Burch P.E."/>
            <person name="Okwuonu G."/>
            <person name="Hines S."/>
            <person name="Lewis L."/>
            <person name="Deramo C."/>
            <person name="Delgado O."/>
            <person name="Dugan-Rocha S."/>
            <person name="Miner G."/>
            <person name="Morgan M."/>
            <person name="Hawes A."/>
            <person name="Gill R."/>
            <person name="Holt R.A."/>
            <person name="Adams M.D."/>
            <person name="Amanatides P.G."/>
            <person name="Baden-Tillson H."/>
            <person name="Barnstead M."/>
            <person name="Chin S."/>
            <person name="Evans C.A."/>
            <person name="Ferriera S."/>
            <person name="Fosler C."/>
            <person name="Glodek A."/>
            <person name="Gu Z."/>
            <person name="Jennings D."/>
            <person name="Kraft C.L."/>
            <person name="Nguyen T."/>
            <person name="Pfannkoch C.M."/>
            <person name="Sitter C."/>
            <person name="Sutton G.G."/>
            <person name="Venter J.C."/>
            <person name="Woodage T."/>
            <person name="Smith D."/>
            <person name="Lee H.-M."/>
            <person name="Gustafson E."/>
            <person name="Cahill P."/>
            <person name="Kana A."/>
            <person name="Doucette-Stamm L."/>
            <person name="Weinstock K."/>
            <person name="Fechtel K."/>
            <person name="Weiss R.B."/>
            <person name="Dunn D.M."/>
            <person name="Green E.D."/>
            <person name="Blakesley R.W."/>
            <person name="Bouffard G.G."/>
            <person name="De Jong P.J."/>
            <person name="Osoegawa K."/>
            <person name="Zhu B."/>
            <person name="Marra M."/>
            <person name="Schein J."/>
            <person name="Bosdet I."/>
            <person name="Fjell C."/>
            <person name="Jones S."/>
            <person name="Krzywinski M."/>
            <person name="Mathewson C."/>
            <person name="Siddiqui A."/>
            <person name="Wye N."/>
            <person name="McPherson J."/>
            <person name="Zhao S."/>
            <person name="Fraser C.M."/>
            <person name="Shetty J."/>
            <person name="Shatsman S."/>
            <person name="Geer K."/>
            <person name="Chen Y."/>
            <person name="Abramzon S."/>
            <person name="Nierman W.C."/>
            <person name="Havlak P.H."/>
            <person name="Chen R."/>
            <person name="Durbin K.J."/>
            <person name="Egan A."/>
            <person name="Ren Y."/>
            <person name="Song X.-Z."/>
            <person name="Li B."/>
            <person name="Liu Y."/>
            <person name="Qin X."/>
            <person name="Cawley S."/>
            <person name="Cooney A.J."/>
            <person name="D'Souza L.M."/>
            <person name="Martin K."/>
            <person name="Wu J.Q."/>
            <person name="Gonzalez-Garay M.L."/>
            <person name="Jackson A.R."/>
            <person name="Kalafus K.J."/>
            <person name="McLeod M.P."/>
            <person name="Milosavljevic A."/>
            <person name="Virk D."/>
            <person name="Volkov A."/>
            <person name="Wheeler D.A."/>
            <person name="Zhang Z."/>
            <person name="Bailey J.A."/>
            <person name="Eichler E.E."/>
            <person name="Tuzun E."/>
            <person name="Birney E."/>
            <person name="Mongin E."/>
            <person name="Ureta-Vidal A."/>
            <person name="Woodwark C."/>
            <person name="Zdobnov E."/>
            <person name="Bork P."/>
            <person name="Suyama M."/>
            <person name="Torrents D."/>
            <person name="Alexandersson M."/>
            <person name="Trask B.J."/>
            <person name="Young J.M."/>
            <person name="Huang H."/>
            <person name="Wang H."/>
            <person name="Xing H."/>
            <person name="Daniels S."/>
            <person name="Gietzen D."/>
            <person name="Schmidt J."/>
            <person name="Stevens K."/>
            <person name="Vitt U."/>
            <person name="Wingrove J."/>
            <person name="Camara F."/>
            <person name="Mar Alba M."/>
            <person name="Abril J.F."/>
            <person name="Guigo R."/>
            <person name="Smit A."/>
            <person name="Dubchak I."/>
            <person name="Rubin E.M."/>
            <person name="Couronne O."/>
            <person name="Poliakov A."/>
            <person name="Huebner N."/>
            <person name="Ganten D."/>
            <person name="Goesele C."/>
            <person name="Hummel O."/>
            <person name="Kreitler T."/>
            <person name="Lee Y.-A."/>
            <person name="Monti J."/>
            <person name="Schulz H."/>
            <person name="Zimdahl H."/>
            <person name="Himmelbauer H."/>
            <person name="Lehrach H."/>
            <person name="Jacob H.J."/>
            <person name="Bromberg S."/>
            <person name="Gullings-Handley J."/>
            <person name="Jensen-Seaman M.I."/>
            <person name="Kwitek A.E."/>
            <person name="Lazar J."/>
            <person name="Pasko D."/>
            <person name="Tonellato P.J."/>
            <person name="Twigger S."/>
            <person name="Ponting C.P."/>
            <person name="Duarte J.M."/>
            <person name="Rice S."/>
            <person name="Goodstadt L."/>
            <person name="Beatson S.A."/>
            <person name="Emes R.D."/>
            <person name="Winter E.E."/>
            <person name="Webber C."/>
            <person name="Brandt P."/>
            <person name="Nyakatura G."/>
            <person name="Adetobi M."/>
            <person name="Chiaromonte F."/>
            <person name="Elnitski L."/>
            <person name="Eswara P."/>
            <person name="Hardison R.C."/>
            <person name="Hou M."/>
            <person name="Kolbe D."/>
            <person name="Makova K."/>
            <person name="Miller W."/>
            <person name="Nekrutenko A."/>
            <person name="Riemer C."/>
            <person name="Schwartz S."/>
            <person name="Taylor J."/>
            <person name="Yang S."/>
            <person name="Zhang Y."/>
            <person name="Lindpaintner K."/>
            <person name="Andrews T.D."/>
            <person name="Caccamo M."/>
            <person name="Clamp M."/>
            <person name="Clarke L."/>
            <person name="Curwen V."/>
            <person name="Durbin R.M."/>
            <person name="Eyras E."/>
            <person name="Searle S.M."/>
            <person name="Cooper G.M."/>
            <person name="Batzoglou S."/>
            <person name="Brudno M."/>
            <person name="Sidow A."/>
            <person name="Stone E.A."/>
            <person name="Payseur B.A."/>
            <person name="Bourque G."/>
            <person name="Lopez-Otin C."/>
            <person name="Puente X.S."/>
            <person name="Chakrabarti K."/>
            <person name="Chatterji S."/>
            <person name="Dewey C."/>
            <person name="Pachter L."/>
            <person name="Bray N."/>
            <person name="Yap V.B."/>
            <person name="Caspi A."/>
            <person name="Tesler G."/>
            <person name="Pevzner P.A."/>
            <person name="Haussler D."/>
            <person name="Roskin K.M."/>
            <person name="Baertsch R."/>
            <person name="Clawson H."/>
            <person name="Furey T.S."/>
            <person name="Hinrichs A.S."/>
            <person name="Karolchik D."/>
            <person name="Kent W.J."/>
            <person name="Rosenbloom K.R."/>
            <person name="Trumbower H."/>
            <person name="Weirauch M."/>
            <person name="Cooper D.N."/>
            <person name="Stenson P.D."/>
            <person name="Ma B."/>
            <person name="Brent M."/>
            <person name="Arumugam M."/>
            <person name="Shteynberg D."/>
            <person name="Copley R.R."/>
            <person name="Taylor M.S."/>
            <person name="Riethman H."/>
            <person name="Mudunuri U."/>
            <person name="Peterson J."/>
            <person name="Guyer M."/>
            <person name="Felsenfeld A."/>
            <person name="Old S."/>
            <person name="Mockrin S."/>
            <person name="Collins F.S."/>
        </authorList>
    </citation>
    <scope>NUCLEOTIDE SEQUENCE [LARGE SCALE GENOMIC DNA]</scope>
    <source>
        <strain>Brown Norway</strain>
    </source>
</reference>
<reference key="2">
    <citation type="journal article" date="2004" name="J. Nutr.">
        <title>Phosphorylation of eIF2alpha is involved in the signaling of indispensable amino acid deficiency in the anterior piriform cortex of the brain in rats.</title>
        <authorList>
            <person name="Gietzen D.W."/>
            <person name="Ross C.M."/>
            <person name="Hao S."/>
            <person name="Sharp J.W."/>
        </authorList>
    </citation>
    <scope>POSSIBLE FUNCTION</scope>
</reference>
<reference key="3">
    <citation type="journal article" date="2005" name="Science">
        <title>Uncharged tRNA and sensing of amino acid deficiency in mammalian piriform cortex.</title>
        <authorList>
            <person name="Hao S."/>
            <person name="Sharp J.W."/>
            <person name="Ross-Inta C.M."/>
            <person name="McDaniel B.J."/>
            <person name="Anthony T.G."/>
            <person name="Wek R.C."/>
            <person name="Cavener D.R."/>
            <person name="McGrath B.C."/>
            <person name="Rudell J.B."/>
            <person name="Koehnle T.J."/>
            <person name="Gietzen D.W."/>
        </authorList>
    </citation>
    <scope>FUNCTION</scope>
</reference>
<name>E2AK4_RAT</name>
<dbReference type="EC" id="2.7.11.1" evidence="4"/>
<dbReference type="EMBL" id="AABR07053494">
    <property type="status" value="NOT_ANNOTATED_CDS"/>
    <property type="molecule type" value="Genomic_DNA"/>
</dbReference>
<dbReference type="EMBL" id="AABR07053495">
    <property type="status" value="NOT_ANNOTATED_CDS"/>
    <property type="molecule type" value="Genomic_DNA"/>
</dbReference>
<dbReference type="SMR" id="D4A7V9"/>
<dbReference type="FunCoup" id="D4A7V9">
    <property type="interactions" value="3602"/>
</dbReference>
<dbReference type="STRING" id="10116.ENSRNOP00000009222"/>
<dbReference type="iPTMnet" id="D4A7V9"/>
<dbReference type="PhosphoSitePlus" id="D4A7V9"/>
<dbReference type="jPOST" id="D4A7V9"/>
<dbReference type="PaxDb" id="10116-ENSRNOP00000009222"/>
<dbReference type="PeptideAtlas" id="D4A7V9"/>
<dbReference type="AGR" id="RGD:1311439"/>
<dbReference type="RGD" id="1311439">
    <property type="gene designation" value="Eif2ak4"/>
</dbReference>
<dbReference type="VEuPathDB" id="HostDB:ENSRNOG00000006027"/>
<dbReference type="eggNOG" id="KOG1035">
    <property type="taxonomic scope" value="Eukaryota"/>
</dbReference>
<dbReference type="HOGENOM" id="CLU_001222_1_0_1"/>
<dbReference type="InParanoid" id="D4A7V9"/>
<dbReference type="TreeFam" id="TF101512"/>
<dbReference type="PRO" id="PR:D4A7V9"/>
<dbReference type="Proteomes" id="UP000002494">
    <property type="component" value="Chromosome 3"/>
</dbReference>
<dbReference type="Bgee" id="ENSRNOG00000006027">
    <property type="expression patterns" value="Expressed in stomach and 20 other cell types or tissues"/>
</dbReference>
<dbReference type="GO" id="GO:0005737">
    <property type="term" value="C:cytoplasm"/>
    <property type="evidence" value="ECO:0000266"/>
    <property type="project" value="RGD"/>
</dbReference>
<dbReference type="GO" id="GO:0005829">
    <property type="term" value="C:cytosol"/>
    <property type="evidence" value="ECO:0000318"/>
    <property type="project" value="GO_Central"/>
</dbReference>
<dbReference type="GO" id="GO:0005634">
    <property type="term" value="C:nucleus"/>
    <property type="evidence" value="ECO:0000318"/>
    <property type="project" value="GO_Central"/>
</dbReference>
<dbReference type="GO" id="GO:0005524">
    <property type="term" value="F:ATP binding"/>
    <property type="evidence" value="ECO:0007669"/>
    <property type="project" value="UniProtKB-KW"/>
</dbReference>
<dbReference type="GO" id="GO:0004694">
    <property type="term" value="F:eukaryotic translation initiation factor 2alpha kinase activity"/>
    <property type="evidence" value="ECO:0000250"/>
    <property type="project" value="UniProtKB"/>
</dbReference>
<dbReference type="GO" id="GO:0106310">
    <property type="term" value="F:protein serine kinase activity"/>
    <property type="evidence" value="ECO:0007669"/>
    <property type="project" value="RHEA"/>
</dbReference>
<dbReference type="GO" id="GO:0004674">
    <property type="term" value="F:protein serine/threonine kinase activity"/>
    <property type="evidence" value="ECO:0000266"/>
    <property type="project" value="RGD"/>
</dbReference>
<dbReference type="GO" id="GO:0000049">
    <property type="term" value="F:tRNA binding"/>
    <property type="evidence" value="ECO:0000250"/>
    <property type="project" value="UniProtKB"/>
</dbReference>
<dbReference type="GO" id="GO:0034198">
    <property type="term" value="P:cellular response to amino acid starvation"/>
    <property type="evidence" value="ECO:0000266"/>
    <property type="project" value="RGD"/>
</dbReference>
<dbReference type="GO" id="GO:0070417">
    <property type="term" value="P:cellular response to cold"/>
    <property type="evidence" value="ECO:0000266"/>
    <property type="project" value="RGD"/>
</dbReference>
<dbReference type="GO" id="GO:0009267">
    <property type="term" value="P:cellular response to starvation"/>
    <property type="evidence" value="ECO:0000266"/>
    <property type="project" value="RGD"/>
</dbReference>
<dbReference type="GO" id="GO:0034644">
    <property type="term" value="P:cellular response to UV"/>
    <property type="evidence" value="ECO:0000266"/>
    <property type="project" value="RGD"/>
</dbReference>
<dbReference type="GO" id="GO:0000077">
    <property type="term" value="P:DNA damage checkpoint signaling"/>
    <property type="evidence" value="ECO:0007669"/>
    <property type="project" value="InterPro"/>
</dbReference>
<dbReference type="GO" id="GO:0030968">
    <property type="term" value="P:endoplasmic reticulum unfolded protein response"/>
    <property type="evidence" value="ECO:0000266"/>
    <property type="project" value="RGD"/>
</dbReference>
<dbReference type="GO" id="GO:0140469">
    <property type="term" value="P:GCN2-mediated signaling"/>
    <property type="evidence" value="ECO:0000250"/>
    <property type="project" value="UniProtKB"/>
</dbReference>
<dbReference type="GO" id="GO:0007612">
    <property type="term" value="P:learning"/>
    <property type="evidence" value="ECO:0000250"/>
    <property type="project" value="UniProtKB"/>
</dbReference>
<dbReference type="GO" id="GO:0007616">
    <property type="term" value="P:long-term memory"/>
    <property type="evidence" value="ECO:0000250"/>
    <property type="project" value="UniProtKB"/>
</dbReference>
<dbReference type="GO" id="GO:0044828">
    <property type="term" value="P:negative regulation by host of viral genome replication"/>
    <property type="evidence" value="ECO:0000250"/>
    <property type="project" value="UniProtKB"/>
</dbReference>
<dbReference type="GO" id="GO:0032792">
    <property type="term" value="P:negative regulation of CREB transcription factor activity"/>
    <property type="evidence" value="ECO:0000250"/>
    <property type="project" value="UniProtKB"/>
</dbReference>
<dbReference type="GO" id="GO:0045665">
    <property type="term" value="P:negative regulation of neuron differentiation"/>
    <property type="evidence" value="ECO:0000266"/>
    <property type="project" value="RGD"/>
</dbReference>
<dbReference type="GO" id="GO:0017148">
    <property type="term" value="P:negative regulation of translation"/>
    <property type="evidence" value="ECO:0000266"/>
    <property type="project" value="RGD"/>
</dbReference>
<dbReference type="GO" id="GO:0045947">
    <property type="term" value="P:negative regulation of translational initiation"/>
    <property type="evidence" value="ECO:0000250"/>
    <property type="project" value="UniProtKB"/>
</dbReference>
<dbReference type="GO" id="GO:0032057">
    <property type="term" value="P:negative regulation of translational initiation in response to stress"/>
    <property type="evidence" value="ECO:0000266"/>
    <property type="project" value="RGD"/>
</dbReference>
<dbReference type="GO" id="GO:1990138">
    <property type="term" value="P:neuron projection extension"/>
    <property type="evidence" value="ECO:0000266"/>
    <property type="project" value="RGD"/>
</dbReference>
<dbReference type="GO" id="GO:0002821">
    <property type="term" value="P:positive regulation of adaptive immune response"/>
    <property type="evidence" value="ECO:0000266"/>
    <property type="project" value="RGD"/>
</dbReference>
<dbReference type="GO" id="GO:0002230">
    <property type="term" value="P:positive regulation of defense response to virus by host"/>
    <property type="evidence" value="ECO:0000250"/>
    <property type="project" value="UniProtKB"/>
</dbReference>
<dbReference type="GO" id="GO:0010628">
    <property type="term" value="P:positive regulation of gene expression"/>
    <property type="evidence" value="ECO:0000266"/>
    <property type="project" value="RGD"/>
</dbReference>
<dbReference type="GO" id="GO:1900273">
    <property type="term" value="P:positive regulation of long-term synaptic potentiation"/>
    <property type="evidence" value="ECO:0000250"/>
    <property type="project" value="UniProtKB"/>
</dbReference>
<dbReference type="GO" id="GO:0071264">
    <property type="term" value="P:positive regulation of translational initiation in response to starvation"/>
    <property type="evidence" value="ECO:0000250"/>
    <property type="project" value="UniProtKB"/>
</dbReference>
<dbReference type="GO" id="GO:0006468">
    <property type="term" value="P:protein phosphorylation"/>
    <property type="evidence" value="ECO:0000250"/>
    <property type="project" value="UniProtKB"/>
</dbReference>
<dbReference type="GO" id="GO:1990611">
    <property type="term" value="P:regulation of cytoplasmic translational initiation in response to stress"/>
    <property type="evidence" value="ECO:0000266"/>
    <property type="project" value="RGD"/>
</dbReference>
<dbReference type="GO" id="GO:0060259">
    <property type="term" value="P:regulation of feeding behavior"/>
    <property type="evidence" value="ECO:0000266"/>
    <property type="project" value="RGD"/>
</dbReference>
<dbReference type="GO" id="GO:0006446">
    <property type="term" value="P:regulation of translational initiation"/>
    <property type="evidence" value="ECO:0000266"/>
    <property type="project" value="RGD"/>
</dbReference>
<dbReference type="GO" id="GO:0010998">
    <property type="term" value="P:regulation of translational initiation by eIF2 alpha phosphorylation"/>
    <property type="evidence" value="ECO:0000250"/>
    <property type="project" value="UniProtKB"/>
</dbReference>
<dbReference type="GO" id="GO:0043558">
    <property type="term" value="P:regulation of translational initiation in response to stress"/>
    <property type="evidence" value="ECO:0000266"/>
    <property type="project" value="RGD"/>
</dbReference>
<dbReference type="GO" id="GO:0034976">
    <property type="term" value="P:response to endoplasmic reticulum stress"/>
    <property type="evidence" value="ECO:0000266"/>
    <property type="project" value="RGD"/>
</dbReference>
<dbReference type="GO" id="GO:0002286">
    <property type="term" value="P:T cell activation involved in immune response"/>
    <property type="evidence" value="ECO:0000266"/>
    <property type="project" value="RGD"/>
</dbReference>
<dbReference type="GO" id="GO:0019081">
    <property type="term" value="P:viral translation"/>
    <property type="evidence" value="ECO:0000250"/>
    <property type="project" value="UniProtKB"/>
</dbReference>
<dbReference type="CDD" id="cd14012">
    <property type="entry name" value="PK_eIF2AK_GCN2_rpt1"/>
    <property type="match status" value="1"/>
</dbReference>
<dbReference type="CDD" id="cd23823">
    <property type="entry name" value="RWD_GCN2"/>
    <property type="match status" value="1"/>
</dbReference>
<dbReference type="CDD" id="cd14046">
    <property type="entry name" value="STKc_EIF2AK4_GCN2_rpt2"/>
    <property type="match status" value="1"/>
</dbReference>
<dbReference type="FunFam" id="1.10.510.10:FF:000338">
    <property type="entry name" value="Eukaryotic translation initiation factor 2-alpha kinase"/>
    <property type="match status" value="1"/>
</dbReference>
<dbReference type="FunFam" id="3.40.50.800:FF:000009">
    <property type="entry name" value="Eukaryotic translation initiation factor 2-alpha kinase"/>
    <property type="match status" value="1"/>
</dbReference>
<dbReference type="FunFam" id="1.10.510.10:FF:000353">
    <property type="entry name" value="Eukaryotic translation initiation factor 2-alpha kinase 4"/>
    <property type="match status" value="1"/>
</dbReference>
<dbReference type="FunFam" id="3.30.200.20:FF:000308">
    <property type="entry name" value="Eukaryotic translation initiation factor 2-alpha kinase 4"/>
    <property type="match status" value="1"/>
</dbReference>
<dbReference type="FunFam" id="3.30.930.10:FF:000031">
    <property type="entry name" value="Eukaryotic translation initiation factor 2-alpha kinase 4"/>
    <property type="match status" value="1"/>
</dbReference>
<dbReference type="FunFam" id="3.10.110.10:FF:000057">
    <property type="entry name" value="eukaryotic translation initiation factor 2-alpha kinase 4"/>
    <property type="match status" value="1"/>
</dbReference>
<dbReference type="Gene3D" id="3.40.50.800">
    <property type="entry name" value="Anticodon-binding domain"/>
    <property type="match status" value="1"/>
</dbReference>
<dbReference type="Gene3D" id="3.30.930.10">
    <property type="entry name" value="Bira Bifunctional Protein, Domain 2"/>
    <property type="match status" value="1"/>
</dbReference>
<dbReference type="Gene3D" id="3.30.200.20">
    <property type="entry name" value="Phosphorylase Kinase, domain 1"/>
    <property type="match status" value="1"/>
</dbReference>
<dbReference type="Gene3D" id="1.10.510.10">
    <property type="entry name" value="Transferase(Phosphotransferase) domain 1"/>
    <property type="match status" value="2"/>
</dbReference>
<dbReference type="Gene3D" id="3.10.110.10">
    <property type="entry name" value="Ubiquitin Conjugating Enzyme"/>
    <property type="match status" value="1"/>
</dbReference>
<dbReference type="InterPro" id="IPR045864">
    <property type="entry name" value="aa-tRNA-synth_II/BPL/LPL"/>
</dbReference>
<dbReference type="InterPro" id="IPR036621">
    <property type="entry name" value="Anticodon-bd_dom_sf"/>
</dbReference>
<dbReference type="InterPro" id="IPR050339">
    <property type="entry name" value="CC_SR_Kinase"/>
</dbReference>
<dbReference type="InterPro" id="IPR016255">
    <property type="entry name" value="Gcn2"/>
</dbReference>
<dbReference type="InterPro" id="IPR041715">
    <property type="entry name" value="HisRS-like_core"/>
</dbReference>
<dbReference type="InterPro" id="IPR024435">
    <property type="entry name" value="HisRS-related_dom"/>
</dbReference>
<dbReference type="InterPro" id="IPR011009">
    <property type="entry name" value="Kinase-like_dom_sf"/>
</dbReference>
<dbReference type="InterPro" id="IPR000719">
    <property type="entry name" value="Prot_kinase_dom"/>
</dbReference>
<dbReference type="InterPro" id="IPR017441">
    <property type="entry name" value="Protein_kinase_ATP_BS"/>
</dbReference>
<dbReference type="InterPro" id="IPR006575">
    <property type="entry name" value="RWD_dom"/>
</dbReference>
<dbReference type="InterPro" id="IPR008271">
    <property type="entry name" value="Ser/Thr_kinase_AS"/>
</dbReference>
<dbReference type="InterPro" id="IPR016135">
    <property type="entry name" value="UBQ-conjugating_enzyme/RWD"/>
</dbReference>
<dbReference type="PANTHER" id="PTHR11042:SF178">
    <property type="entry name" value="EUKARYOTIC TRANSLATION INITIATION FACTOR 2-ALPHA KINASE 1"/>
    <property type="match status" value="1"/>
</dbReference>
<dbReference type="PANTHER" id="PTHR11042">
    <property type="entry name" value="EUKARYOTIC TRANSLATION INITIATION FACTOR 2-ALPHA KINASE EIF2-ALPHA KINASE -RELATED"/>
    <property type="match status" value="1"/>
</dbReference>
<dbReference type="Pfam" id="PF12745">
    <property type="entry name" value="HGTP_anticodon2"/>
    <property type="match status" value="1"/>
</dbReference>
<dbReference type="Pfam" id="PF00069">
    <property type="entry name" value="Pkinase"/>
    <property type="match status" value="3"/>
</dbReference>
<dbReference type="Pfam" id="PF05773">
    <property type="entry name" value="RWD"/>
    <property type="match status" value="1"/>
</dbReference>
<dbReference type="Pfam" id="PF13393">
    <property type="entry name" value="tRNA-synt_His"/>
    <property type="match status" value="1"/>
</dbReference>
<dbReference type="PIRSF" id="PIRSF000660">
    <property type="entry name" value="Ser/Thr_PK_GCN2"/>
    <property type="match status" value="1"/>
</dbReference>
<dbReference type="SMART" id="SM00591">
    <property type="entry name" value="RWD"/>
    <property type="match status" value="1"/>
</dbReference>
<dbReference type="SMART" id="SM00220">
    <property type="entry name" value="S_TKc"/>
    <property type="match status" value="2"/>
</dbReference>
<dbReference type="SUPFAM" id="SSF55681">
    <property type="entry name" value="Class II aaRS and biotin synthetases"/>
    <property type="match status" value="1"/>
</dbReference>
<dbReference type="SUPFAM" id="SSF56112">
    <property type="entry name" value="Protein kinase-like (PK-like)"/>
    <property type="match status" value="2"/>
</dbReference>
<dbReference type="SUPFAM" id="SSF54495">
    <property type="entry name" value="UBC-like"/>
    <property type="match status" value="1"/>
</dbReference>
<dbReference type="PROSITE" id="PS00107">
    <property type="entry name" value="PROTEIN_KINASE_ATP"/>
    <property type="match status" value="1"/>
</dbReference>
<dbReference type="PROSITE" id="PS50011">
    <property type="entry name" value="PROTEIN_KINASE_DOM"/>
    <property type="match status" value="2"/>
</dbReference>
<dbReference type="PROSITE" id="PS00108">
    <property type="entry name" value="PROTEIN_KINASE_ST"/>
    <property type="match status" value="1"/>
</dbReference>
<dbReference type="PROSITE" id="PS50908">
    <property type="entry name" value="RWD"/>
    <property type="match status" value="1"/>
</dbReference>
<organism>
    <name type="scientific">Rattus norvegicus</name>
    <name type="common">Rat</name>
    <dbReference type="NCBI Taxonomy" id="10116"/>
    <lineage>
        <taxon>Eukaryota</taxon>
        <taxon>Metazoa</taxon>
        <taxon>Chordata</taxon>
        <taxon>Craniata</taxon>
        <taxon>Vertebrata</taxon>
        <taxon>Euteleostomi</taxon>
        <taxon>Mammalia</taxon>
        <taxon>Eutheria</taxon>
        <taxon>Euarchontoglires</taxon>
        <taxon>Glires</taxon>
        <taxon>Rodentia</taxon>
        <taxon>Myomorpha</taxon>
        <taxon>Muroidea</taxon>
        <taxon>Muridae</taxon>
        <taxon>Murinae</taxon>
        <taxon>Rattus</taxon>
    </lineage>
</organism>